<name>OSKA_DROME</name>
<comment type="function">
    <text evidence="5 7 8">Organizes the germ plasm and directs localization of the posterior determinant nanos. Oskar protein is required to keep nanos (nos) RNA and staufen protein at the posterior pole.</text>
</comment>
<comment type="subunit">
    <text evidence="3">Interacts with smaug (smg).</text>
</comment>
<comment type="subunit">
    <molecule>Isoform A</molecule>
    <text evidence="9">Interacts with yl/yolkless.</text>
</comment>
<comment type="subcellular location">
    <subcellularLocation>
        <location evidence="9">Endosome</location>
    </subcellularLocation>
    <text evidence="9">Colocalizes with endocytosed yl/yolkless on endosomes.</text>
</comment>
<comment type="alternative products">
    <event type="alternative initiation"/>
    <isoform>
        <id>P25158-1</id>
        <name evidence="12">A</name>
        <name evidence="11">Long</name>
        <sequence type="displayed"/>
    </isoform>
    <isoform>
        <id>P25158-2</id>
        <name evidence="12">C</name>
        <name evidence="11">Short</name>
        <sequence type="described" ref="VSP_016006"/>
    </isoform>
</comment>
<comment type="tissue specificity">
    <text evidence="4 7 8">Begins to accumulate at the posterior pole of the oocyte from stage 8 onwards.</text>
</comment>
<comment type="miscellaneous">
    <text>Capu, spir, and stau are required for the initial localization of osk to the posterior pole.</text>
</comment>
<protein>
    <recommendedName>
        <fullName>Maternal effect protein oskar</fullName>
    </recommendedName>
</protein>
<feature type="chain" id="PRO_0000058086" description="Maternal effect protein oskar">
    <location>
        <begin position="1"/>
        <end position="606"/>
    </location>
</feature>
<feature type="domain" description="HTH OST-type" evidence="2">
    <location>
        <begin position="152"/>
        <end position="221"/>
    </location>
</feature>
<feature type="region of interest" description="Leucine-zipper" evidence="1">
    <location>
        <begin position="425"/>
        <end position="439"/>
    </location>
</feature>
<feature type="modified residue" description="Phosphoserine" evidence="6">
    <location>
        <position position="270"/>
    </location>
</feature>
<feature type="modified residue" description="Phosphoserine" evidence="6">
    <location>
        <position position="275"/>
    </location>
</feature>
<feature type="splice variant" id="VSP_016006" description="In isoform C." evidence="10">
    <location>
        <begin position="1"/>
        <end position="138"/>
    </location>
</feature>
<feature type="helix" evidence="14">
    <location>
        <begin position="147"/>
        <end position="152"/>
    </location>
</feature>
<feature type="helix" evidence="14">
    <location>
        <begin position="156"/>
        <end position="166"/>
    </location>
</feature>
<feature type="turn" evidence="14">
    <location>
        <begin position="167"/>
        <end position="170"/>
    </location>
</feature>
<feature type="helix" evidence="14">
    <location>
        <begin position="174"/>
        <end position="185"/>
    </location>
</feature>
<feature type="helix" evidence="14">
    <location>
        <begin position="195"/>
        <end position="199"/>
    </location>
</feature>
<feature type="strand" evidence="14">
    <location>
        <begin position="205"/>
        <end position="209"/>
    </location>
</feature>
<feature type="strand" evidence="14">
    <location>
        <begin position="215"/>
        <end position="219"/>
    </location>
</feature>
<feature type="turn" evidence="14">
    <location>
        <begin position="223"/>
        <end position="225"/>
    </location>
</feature>
<feature type="helix" evidence="14">
    <location>
        <begin position="226"/>
        <end position="233"/>
    </location>
</feature>
<feature type="turn" evidence="13">
    <location>
        <begin position="401"/>
        <end position="403"/>
    </location>
</feature>
<feature type="helix" evidence="13">
    <location>
        <begin position="407"/>
        <end position="410"/>
    </location>
</feature>
<feature type="turn" evidence="13">
    <location>
        <begin position="414"/>
        <end position="416"/>
    </location>
</feature>
<feature type="strand" evidence="13">
    <location>
        <begin position="423"/>
        <end position="428"/>
    </location>
</feature>
<feature type="helix" evidence="13">
    <location>
        <begin position="429"/>
        <end position="438"/>
    </location>
</feature>
<feature type="strand" evidence="13">
    <location>
        <begin position="454"/>
        <end position="456"/>
    </location>
</feature>
<feature type="helix" evidence="13">
    <location>
        <begin position="461"/>
        <end position="469"/>
    </location>
</feature>
<feature type="strand" evidence="13">
    <location>
        <begin position="478"/>
        <end position="482"/>
    </location>
</feature>
<feature type="helix" evidence="13">
    <location>
        <begin position="485"/>
        <end position="489"/>
    </location>
</feature>
<feature type="helix" evidence="13">
    <location>
        <begin position="494"/>
        <end position="510"/>
    </location>
</feature>
<feature type="strand" evidence="13">
    <location>
        <begin position="514"/>
        <end position="518"/>
    </location>
</feature>
<feature type="helix" evidence="13">
    <location>
        <begin position="524"/>
        <end position="526"/>
    </location>
</feature>
<feature type="helix" evidence="13">
    <location>
        <begin position="530"/>
        <end position="546"/>
    </location>
</feature>
<feature type="turn" evidence="13">
    <location>
        <begin position="547"/>
        <end position="549"/>
    </location>
</feature>
<feature type="helix" evidence="13">
    <location>
        <begin position="557"/>
        <end position="559"/>
    </location>
</feature>
<feature type="helix" evidence="13">
    <location>
        <begin position="568"/>
        <end position="570"/>
    </location>
</feature>
<feature type="helix" evidence="13">
    <location>
        <begin position="590"/>
        <end position="602"/>
    </location>
</feature>
<proteinExistence type="evidence at protein level"/>
<organism>
    <name type="scientific">Drosophila melanogaster</name>
    <name type="common">Fruit fly</name>
    <dbReference type="NCBI Taxonomy" id="7227"/>
    <lineage>
        <taxon>Eukaryota</taxon>
        <taxon>Metazoa</taxon>
        <taxon>Ecdysozoa</taxon>
        <taxon>Arthropoda</taxon>
        <taxon>Hexapoda</taxon>
        <taxon>Insecta</taxon>
        <taxon>Pterygota</taxon>
        <taxon>Neoptera</taxon>
        <taxon>Endopterygota</taxon>
        <taxon>Diptera</taxon>
        <taxon>Brachycera</taxon>
        <taxon>Muscomorpha</taxon>
        <taxon>Ephydroidea</taxon>
        <taxon>Drosophilidae</taxon>
        <taxon>Drosophila</taxon>
        <taxon>Sophophora</taxon>
    </lineage>
</organism>
<accession>P25158</accession>
<accession>Q59DY0</accession>
<accession>Q95TT0</accession>
<accession>Q9V3P1</accession>
<reference key="1">
    <citation type="journal article" date="1991" name="Cell">
        <title>Oskar mRNA is localized to the posterior pole of the Drosophila oocyte.</title>
        <authorList>
            <person name="Kim-Ha J."/>
            <person name="Smith J.L."/>
            <person name="Macdonald P.M."/>
        </authorList>
    </citation>
    <scope>NUCLEOTIDE SEQUENCE [GENOMIC DNA]</scope>
    <scope>FUNCTION</scope>
    <scope>TISSUE SPECIFICITY</scope>
</reference>
<reference key="2">
    <citation type="journal article" date="1991" name="Cell">
        <title>Oskar organizes the germ plasm and directs localization of the posterior determinant nanos.</title>
        <authorList>
            <person name="Ephrussi A."/>
            <person name="Dickinson L.K."/>
            <person name="Lehmann R."/>
        </authorList>
    </citation>
    <scope>NUCLEOTIDE SEQUENCE [GENOMIC DNA]</scope>
    <scope>FUNCTION</scope>
    <scope>TISSUE SPECIFICITY</scope>
</reference>
<reference key="3">
    <citation type="journal article" date="2000" name="Science">
        <title>The genome sequence of Drosophila melanogaster.</title>
        <authorList>
            <person name="Adams M.D."/>
            <person name="Celniker S.E."/>
            <person name="Holt R.A."/>
            <person name="Evans C.A."/>
            <person name="Gocayne J.D."/>
            <person name="Amanatides P.G."/>
            <person name="Scherer S.E."/>
            <person name="Li P.W."/>
            <person name="Hoskins R.A."/>
            <person name="Galle R.F."/>
            <person name="George R.A."/>
            <person name="Lewis S.E."/>
            <person name="Richards S."/>
            <person name="Ashburner M."/>
            <person name="Henderson S.N."/>
            <person name="Sutton G.G."/>
            <person name="Wortman J.R."/>
            <person name="Yandell M.D."/>
            <person name="Zhang Q."/>
            <person name="Chen L.X."/>
            <person name="Brandon R.C."/>
            <person name="Rogers Y.-H.C."/>
            <person name="Blazej R.G."/>
            <person name="Champe M."/>
            <person name="Pfeiffer B.D."/>
            <person name="Wan K.H."/>
            <person name="Doyle C."/>
            <person name="Baxter E.G."/>
            <person name="Helt G."/>
            <person name="Nelson C.R."/>
            <person name="Miklos G.L.G."/>
            <person name="Abril J.F."/>
            <person name="Agbayani A."/>
            <person name="An H.-J."/>
            <person name="Andrews-Pfannkoch C."/>
            <person name="Baldwin D."/>
            <person name="Ballew R.M."/>
            <person name="Basu A."/>
            <person name="Baxendale J."/>
            <person name="Bayraktaroglu L."/>
            <person name="Beasley E.M."/>
            <person name="Beeson K.Y."/>
            <person name="Benos P.V."/>
            <person name="Berman B.P."/>
            <person name="Bhandari D."/>
            <person name="Bolshakov S."/>
            <person name="Borkova D."/>
            <person name="Botchan M.R."/>
            <person name="Bouck J."/>
            <person name="Brokstein P."/>
            <person name="Brottier P."/>
            <person name="Burtis K.C."/>
            <person name="Busam D.A."/>
            <person name="Butler H."/>
            <person name="Cadieu E."/>
            <person name="Center A."/>
            <person name="Chandra I."/>
            <person name="Cherry J.M."/>
            <person name="Cawley S."/>
            <person name="Dahlke C."/>
            <person name="Davenport L.B."/>
            <person name="Davies P."/>
            <person name="de Pablos B."/>
            <person name="Delcher A."/>
            <person name="Deng Z."/>
            <person name="Mays A.D."/>
            <person name="Dew I."/>
            <person name="Dietz S.M."/>
            <person name="Dodson K."/>
            <person name="Doup L.E."/>
            <person name="Downes M."/>
            <person name="Dugan-Rocha S."/>
            <person name="Dunkov B.C."/>
            <person name="Dunn P."/>
            <person name="Durbin K.J."/>
            <person name="Evangelista C.C."/>
            <person name="Ferraz C."/>
            <person name="Ferriera S."/>
            <person name="Fleischmann W."/>
            <person name="Fosler C."/>
            <person name="Gabrielian A.E."/>
            <person name="Garg N.S."/>
            <person name="Gelbart W.M."/>
            <person name="Glasser K."/>
            <person name="Glodek A."/>
            <person name="Gong F."/>
            <person name="Gorrell J.H."/>
            <person name="Gu Z."/>
            <person name="Guan P."/>
            <person name="Harris M."/>
            <person name="Harris N.L."/>
            <person name="Harvey D.A."/>
            <person name="Heiman T.J."/>
            <person name="Hernandez J.R."/>
            <person name="Houck J."/>
            <person name="Hostin D."/>
            <person name="Houston K.A."/>
            <person name="Howland T.J."/>
            <person name="Wei M.-H."/>
            <person name="Ibegwam C."/>
            <person name="Jalali M."/>
            <person name="Kalush F."/>
            <person name="Karpen G.H."/>
            <person name="Ke Z."/>
            <person name="Kennison J.A."/>
            <person name="Ketchum K.A."/>
            <person name="Kimmel B.E."/>
            <person name="Kodira C.D."/>
            <person name="Kraft C.L."/>
            <person name="Kravitz S."/>
            <person name="Kulp D."/>
            <person name="Lai Z."/>
            <person name="Lasko P."/>
            <person name="Lei Y."/>
            <person name="Levitsky A.A."/>
            <person name="Li J.H."/>
            <person name="Li Z."/>
            <person name="Liang Y."/>
            <person name="Lin X."/>
            <person name="Liu X."/>
            <person name="Mattei B."/>
            <person name="McIntosh T.C."/>
            <person name="McLeod M.P."/>
            <person name="McPherson D."/>
            <person name="Merkulov G."/>
            <person name="Milshina N.V."/>
            <person name="Mobarry C."/>
            <person name="Morris J."/>
            <person name="Moshrefi A."/>
            <person name="Mount S.M."/>
            <person name="Moy M."/>
            <person name="Murphy B."/>
            <person name="Murphy L."/>
            <person name="Muzny D.M."/>
            <person name="Nelson D.L."/>
            <person name="Nelson D.R."/>
            <person name="Nelson K.A."/>
            <person name="Nixon K."/>
            <person name="Nusskern D.R."/>
            <person name="Pacleb J.M."/>
            <person name="Palazzolo M."/>
            <person name="Pittman G.S."/>
            <person name="Pan S."/>
            <person name="Pollard J."/>
            <person name="Puri V."/>
            <person name="Reese M.G."/>
            <person name="Reinert K."/>
            <person name="Remington K."/>
            <person name="Saunders R.D.C."/>
            <person name="Scheeler F."/>
            <person name="Shen H."/>
            <person name="Shue B.C."/>
            <person name="Siden-Kiamos I."/>
            <person name="Simpson M."/>
            <person name="Skupski M.P."/>
            <person name="Smith T.J."/>
            <person name="Spier E."/>
            <person name="Spradling A.C."/>
            <person name="Stapleton M."/>
            <person name="Strong R."/>
            <person name="Sun E."/>
            <person name="Svirskas R."/>
            <person name="Tector C."/>
            <person name="Turner R."/>
            <person name="Venter E."/>
            <person name="Wang A.H."/>
            <person name="Wang X."/>
            <person name="Wang Z.-Y."/>
            <person name="Wassarman D.A."/>
            <person name="Weinstock G.M."/>
            <person name="Weissenbach J."/>
            <person name="Williams S.M."/>
            <person name="Woodage T."/>
            <person name="Worley K.C."/>
            <person name="Wu D."/>
            <person name="Yang S."/>
            <person name="Yao Q.A."/>
            <person name="Ye J."/>
            <person name="Yeh R.-F."/>
            <person name="Zaveri J.S."/>
            <person name="Zhan M."/>
            <person name="Zhang G."/>
            <person name="Zhao Q."/>
            <person name="Zheng L."/>
            <person name="Zheng X.H."/>
            <person name="Zhong F.N."/>
            <person name="Zhong W."/>
            <person name="Zhou X."/>
            <person name="Zhu S.C."/>
            <person name="Zhu X."/>
            <person name="Smith H.O."/>
            <person name="Gibbs R.A."/>
            <person name="Myers E.W."/>
            <person name="Rubin G.M."/>
            <person name="Venter J.C."/>
        </authorList>
    </citation>
    <scope>NUCLEOTIDE SEQUENCE [LARGE SCALE GENOMIC DNA]</scope>
    <source>
        <strain>Berkeley</strain>
    </source>
</reference>
<reference key="4">
    <citation type="journal article" date="2002" name="Genome Biol.">
        <title>Annotation of the Drosophila melanogaster euchromatic genome: a systematic review.</title>
        <authorList>
            <person name="Misra S."/>
            <person name="Crosby M.A."/>
            <person name="Mungall C.J."/>
            <person name="Matthews B.B."/>
            <person name="Campbell K.S."/>
            <person name="Hradecky P."/>
            <person name="Huang Y."/>
            <person name="Kaminker J.S."/>
            <person name="Millburn G.H."/>
            <person name="Prochnik S.E."/>
            <person name="Smith C.D."/>
            <person name="Tupy J.L."/>
            <person name="Whitfield E.J."/>
            <person name="Bayraktaroglu L."/>
            <person name="Berman B.P."/>
            <person name="Bettencourt B.R."/>
            <person name="Celniker S.E."/>
            <person name="de Grey A.D.N.J."/>
            <person name="Drysdale R.A."/>
            <person name="Harris N.L."/>
            <person name="Richter J."/>
            <person name="Russo S."/>
            <person name="Schroeder A.J."/>
            <person name="Shu S.Q."/>
            <person name="Stapleton M."/>
            <person name="Yamada C."/>
            <person name="Ashburner M."/>
            <person name="Gelbart W.M."/>
            <person name="Rubin G.M."/>
            <person name="Lewis S.E."/>
        </authorList>
    </citation>
    <scope>GENOME REANNOTATION</scope>
    <scope>ALTERNATIVE SPLICING</scope>
    <source>
        <strain>Berkeley</strain>
    </source>
</reference>
<reference key="5">
    <citation type="journal article" date="2002" name="Genome Biol.">
        <title>A Drosophila full-length cDNA resource.</title>
        <authorList>
            <person name="Stapleton M."/>
            <person name="Carlson J.W."/>
            <person name="Brokstein P."/>
            <person name="Yu C."/>
            <person name="Champe M."/>
            <person name="George R.A."/>
            <person name="Guarin H."/>
            <person name="Kronmiller B."/>
            <person name="Pacleb J.M."/>
            <person name="Park S."/>
            <person name="Wan K.H."/>
            <person name="Rubin G.M."/>
            <person name="Celniker S.E."/>
        </authorList>
    </citation>
    <scope>NUCLEOTIDE SEQUENCE [LARGE SCALE MRNA] (ISOFORM C)</scope>
    <source>
        <strain>Berkeley</strain>
        <tissue>Embryo</tissue>
    </source>
</reference>
<reference key="6">
    <citation type="journal article" date="1992" name="Nature">
        <title>Induction of germ cell formation by oskar.</title>
        <authorList>
            <person name="Ephrussi A."/>
            <person name="Lehmann R."/>
        </authorList>
    </citation>
    <scope>FUNCTION</scope>
</reference>
<reference key="7">
    <citation type="journal article" date="2001" name="Development">
        <title>Me31B silences translation of oocyte-localizing RNAs through the formation of cytoplasmic RNP complex during Drosophila oogenesis.</title>
        <authorList>
            <person name="Nakamura A."/>
            <person name="Amikura R."/>
            <person name="Hanyu K."/>
            <person name="Kobayashi S."/>
        </authorList>
    </citation>
    <scope>TISSUE SPECIFICITY</scope>
</reference>
<reference key="8">
    <citation type="journal article" date="1999" name="Mol. Cell">
        <title>Smaug, a novel RNA-binding protein that operates a translational switch in Drosophila.</title>
        <authorList>
            <person name="Dahanukar A."/>
            <person name="Walker J.A."/>
            <person name="Wharton R.P."/>
        </authorList>
    </citation>
    <scope>INTERACTION WITH SMG</scope>
</reference>
<reference key="9">
    <citation type="journal article" date="2008" name="J. Proteome Res.">
        <title>Phosphoproteome analysis of Drosophila melanogaster embryos.</title>
        <authorList>
            <person name="Zhai B."/>
            <person name="Villen J."/>
            <person name="Beausoleil S.A."/>
            <person name="Mintseris J."/>
            <person name="Gygi S.P."/>
        </authorList>
    </citation>
    <scope>PHOSPHORYLATION [LARGE SCALE ANALYSIS] AT SER-270 AND SER-275</scope>
    <scope>IDENTIFICATION BY MASS SPECTROMETRY</scope>
    <source>
        <tissue>Embryo</tissue>
    </source>
</reference>
<reference key="10">
    <citation type="journal article" date="2021" name="PLoS Biol.">
        <title>Receptor-mediated yolk uptake is required for oskar mRNA localization and cortical anchorage of germ plasm components in the Drosophila oocyte.</title>
        <authorList>
            <person name="Tanaka T."/>
            <person name="Tani N."/>
            <person name="Nakamura A."/>
        </authorList>
    </citation>
    <scope>INTERACTION WITH YL</scope>
    <scope>SUBCELLULAR LOCATION</scope>
</reference>
<keyword id="KW-0002">3D-structure</keyword>
<keyword id="KW-0024">Alternative initiation</keyword>
<keyword id="KW-0217">Developmental protein</keyword>
<keyword id="KW-0967">Endosome</keyword>
<keyword id="KW-0597">Phosphoprotein</keyword>
<keyword id="KW-1185">Reference proteome</keyword>
<sequence length="606" mass="69284">MAAVTSEFPSKPISYTSTNTSAKTYYLKSVKKRVTTCFQQLRDKLQSSGSFRKSSSSCLNQIFVRSDFSACGERFRKIFKSARKTELPELWKVPLVAHELTSRQSSQQLQVVARLFSSTQISTKEITYNSNSNTSENNMTIIESNYISVREEYPDIDSEVRAILLSHAQNGITISSIKSEYRKLTGNPFPLHDNVTDFLLTIPNVTAECSESGKRIFNLKASLKNGHLLDMVLNQKERTSDYSSGAPSLENIPRAPPRYWKNPFKRRALSQLNTSPRTVPKITDEKTKDIATRPVSLHQMANEAAESNWCYQDNWKHLNNFYQQASVNAPKMPVPINIYSPDAPEEPINLAPPGHQPSCRTQSQKTEPTENRHLGIFVHPFNGMNIMKRRHEMTPTPTILTSGTYNDSLLTINSDYDAYLLDFPLMGDDFMLYLARMELKCRFRRHERVLQSGLCVSGLTINGARNRLKRVQLPEGTQIIVNIGSVDIMRGKPLVQIEHDFRLLIKEMHNMRLVPILTNLAPLGNYCHDKVLCDKIYRFNKFIRSECCHLKVIDIHSCLINERGVVRFDCFQASPRQVTGSKEPYLFWNKIGRQRVLQVIETSLEY</sequence>
<dbReference type="EMBL" id="M63492">
    <property type="protein sequence ID" value="AAA28739.1"/>
    <property type="molecule type" value="Genomic_DNA"/>
</dbReference>
<dbReference type="EMBL" id="M65178">
    <property type="protein sequence ID" value="AAA28738.1"/>
    <property type="molecule type" value="Genomic_DNA"/>
</dbReference>
<dbReference type="EMBL" id="AE014297">
    <property type="protein sequence ID" value="AAF54306.1"/>
    <property type="molecule type" value="Genomic_DNA"/>
</dbReference>
<dbReference type="EMBL" id="AE014297">
    <property type="protein sequence ID" value="AAS65129.1"/>
    <property type="molecule type" value="Genomic_DNA"/>
</dbReference>
<dbReference type="EMBL" id="AY058560">
    <property type="protein sequence ID" value="AAL13789.1"/>
    <property type="molecule type" value="mRNA"/>
</dbReference>
<dbReference type="PIR" id="A40313">
    <property type="entry name" value="A40313"/>
</dbReference>
<dbReference type="RefSeq" id="NP_731295.1">
    <molecule id="P25158-1"/>
    <property type="nucleotide sequence ID" value="NM_169248.4"/>
</dbReference>
<dbReference type="RefSeq" id="NP_996186.1">
    <molecule id="P25158-2"/>
    <property type="nucleotide sequence ID" value="NM_206464.3"/>
</dbReference>
<dbReference type="PDB" id="5A48">
    <property type="method" value="X-ray"/>
    <property type="resolution" value="2.35 A"/>
    <property type="chains" value="A/B=139-240"/>
</dbReference>
<dbReference type="PDB" id="5A49">
    <property type="method" value="X-ray"/>
    <property type="resolution" value="2.10 A"/>
    <property type="chains" value="A/B/C/D/E/F/G/H/I/J=139-222"/>
</dbReference>
<dbReference type="PDB" id="5A4A">
    <property type="method" value="X-ray"/>
    <property type="resolution" value="1.70 A"/>
    <property type="chains" value="A=401-606"/>
</dbReference>
<dbReference type="PDB" id="5CD7">
    <property type="method" value="X-ray"/>
    <property type="resolution" value="2.50 A"/>
    <property type="chains" value="A/B/C/D/E/F=150-224"/>
</dbReference>
<dbReference type="PDB" id="5CD8">
    <property type="method" value="X-ray"/>
    <property type="resolution" value="3.00 A"/>
    <property type="chains" value="A/B/C/D/E/F=150-240"/>
</dbReference>
<dbReference type="PDB" id="5CD9">
    <property type="method" value="X-ray"/>
    <property type="resolution" value="2.10 A"/>
    <property type="chains" value="A=393-606"/>
</dbReference>
<dbReference type="PDB" id="5NT7">
    <property type="method" value="X-ray"/>
    <property type="resolution" value="1.40 A"/>
    <property type="chains" value="A/C=139-240"/>
</dbReference>
<dbReference type="PDBsum" id="5A48"/>
<dbReference type="PDBsum" id="5A49"/>
<dbReference type="PDBsum" id="5A4A"/>
<dbReference type="PDBsum" id="5CD7"/>
<dbReference type="PDBsum" id="5CD8"/>
<dbReference type="PDBsum" id="5CD9"/>
<dbReference type="PDBsum" id="5NT7"/>
<dbReference type="SMR" id="P25158"/>
<dbReference type="BioGRID" id="66235">
    <property type="interactions" value="122"/>
</dbReference>
<dbReference type="DIP" id="DIP-18970N"/>
<dbReference type="FunCoup" id="P25158">
    <property type="interactions" value="19"/>
</dbReference>
<dbReference type="IntAct" id="P25158">
    <property type="interactions" value="24"/>
</dbReference>
<dbReference type="STRING" id="7227.FBpp0081435"/>
<dbReference type="iPTMnet" id="P25158"/>
<dbReference type="PaxDb" id="7227-FBpp0081435"/>
<dbReference type="ABCD" id="P25158">
    <property type="antibodies" value="2 sequenced antibodies"/>
</dbReference>
<dbReference type="DNASU" id="41066"/>
<dbReference type="EnsemblMetazoa" id="FBtr0081954">
    <molecule id="P25158-1"/>
    <property type="protein sequence ID" value="FBpp0081435"/>
    <property type="gene ID" value="FBgn0003015"/>
</dbReference>
<dbReference type="EnsemblMetazoa" id="FBtr0081956">
    <molecule id="P25158-2"/>
    <property type="protein sequence ID" value="FBpp0089372"/>
    <property type="gene ID" value="FBgn0003015"/>
</dbReference>
<dbReference type="GeneID" id="41066"/>
<dbReference type="KEGG" id="dme:Dmel_CG10901"/>
<dbReference type="UCSC" id="CG10901-RA">
    <molecule id="P25158-1"/>
    <property type="organism name" value="d. melanogaster"/>
</dbReference>
<dbReference type="AGR" id="FB:FBgn0003015"/>
<dbReference type="CTD" id="41066"/>
<dbReference type="FlyBase" id="FBgn0003015">
    <property type="gene designation" value="osk"/>
</dbReference>
<dbReference type="VEuPathDB" id="VectorBase:FBgn0003015"/>
<dbReference type="eggNOG" id="ENOG502SUPD">
    <property type="taxonomic scope" value="Eukaryota"/>
</dbReference>
<dbReference type="InParanoid" id="P25158"/>
<dbReference type="OMA" id="KHLNNQY"/>
<dbReference type="OrthoDB" id="10034606at2759"/>
<dbReference type="PhylomeDB" id="P25158"/>
<dbReference type="SignaLink" id="P25158"/>
<dbReference type="BioGRID-ORCS" id="41066">
    <property type="hits" value="0 hits in 1 CRISPR screen"/>
</dbReference>
<dbReference type="CD-CODE" id="1DA11FFF">
    <property type="entry name" value="Germ plasm"/>
</dbReference>
<dbReference type="CD-CODE" id="D9D613FC">
    <property type="entry name" value="Synthetic Condensate 000290"/>
</dbReference>
<dbReference type="EvolutionaryTrace" id="P25158"/>
<dbReference type="GenomeRNAi" id="41066"/>
<dbReference type="PRO" id="PR:P25158"/>
<dbReference type="Proteomes" id="UP000000803">
    <property type="component" value="Chromosome 3R"/>
</dbReference>
<dbReference type="Bgee" id="FBgn0003015">
    <property type="expression patterns" value="Expressed in ovary and 46 other cell types or tissues"/>
</dbReference>
<dbReference type="ExpressionAtlas" id="P25158">
    <property type="expression patterns" value="baseline and differential"/>
</dbReference>
<dbReference type="GO" id="GO:0005938">
    <property type="term" value="C:cell cortex"/>
    <property type="evidence" value="ECO:0000314"/>
    <property type="project" value="FlyBase"/>
</dbReference>
<dbReference type="GO" id="GO:0005737">
    <property type="term" value="C:cytoplasm"/>
    <property type="evidence" value="ECO:0000314"/>
    <property type="project" value="FlyBase"/>
</dbReference>
<dbReference type="GO" id="GO:0005768">
    <property type="term" value="C:endosome"/>
    <property type="evidence" value="ECO:0007669"/>
    <property type="project" value="UniProtKB-SubCell"/>
</dbReference>
<dbReference type="GO" id="GO:0043073">
    <property type="term" value="C:germ cell nucleus"/>
    <property type="evidence" value="ECO:0000314"/>
    <property type="project" value="FlyBase"/>
</dbReference>
<dbReference type="GO" id="GO:0043186">
    <property type="term" value="C:P granule"/>
    <property type="evidence" value="ECO:0000314"/>
    <property type="project" value="FlyBase"/>
</dbReference>
<dbReference type="GO" id="GO:0045495">
    <property type="term" value="C:pole plasm"/>
    <property type="evidence" value="ECO:0000304"/>
    <property type="project" value="FlyBase"/>
</dbReference>
<dbReference type="GO" id="GO:0061803">
    <property type="term" value="C:posterior cell cortex"/>
    <property type="evidence" value="ECO:0000314"/>
    <property type="project" value="FlyBase"/>
</dbReference>
<dbReference type="GO" id="GO:0003729">
    <property type="term" value="F:mRNA binding"/>
    <property type="evidence" value="ECO:0000314"/>
    <property type="project" value="FlyBase"/>
</dbReference>
<dbReference type="GO" id="GO:0030866">
    <property type="term" value="P:cortical actin cytoskeleton organization"/>
    <property type="evidence" value="ECO:0000315"/>
    <property type="project" value="FlyBase"/>
</dbReference>
<dbReference type="GO" id="GO:0007281">
    <property type="term" value="P:germ cell development"/>
    <property type="evidence" value="ECO:0000315"/>
    <property type="project" value="FlyBase"/>
</dbReference>
<dbReference type="GO" id="GO:0007616">
    <property type="term" value="P:long-term memory"/>
    <property type="evidence" value="ECO:0000304"/>
    <property type="project" value="FlyBase"/>
</dbReference>
<dbReference type="GO" id="GO:0008103">
    <property type="term" value="P:oocyte microtubule cytoskeleton polarization"/>
    <property type="evidence" value="ECO:0000315"/>
    <property type="project" value="FlyBase"/>
</dbReference>
<dbReference type="GO" id="GO:0048477">
    <property type="term" value="P:oogenesis"/>
    <property type="evidence" value="ECO:0000315"/>
    <property type="project" value="FlyBase"/>
</dbReference>
<dbReference type="GO" id="GO:1903863">
    <property type="term" value="P:P granule assembly"/>
    <property type="evidence" value="ECO:0000315"/>
    <property type="project" value="FlyBase"/>
</dbReference>
<dbReference type="GO" id="GO:0030719">
    <property type="term" value="P:P granule organization"/>
    <property type="evidence" value="ECO:0000315"/>
    <property type="project" value="FlyBase"/>
</dbReference>
<dbReference type="GO" id="GO:0007279">
    <property type="term" value="P:pole cell formation"/>
    <property type="evidence" value="ECO:0000315"/>
    <property type="project" value="FlyBase"/>
</dbReference>
<dbReference type="GO" id="GO:0007315">
    <property type="term" value="P:pole plasm assembly"/>
    <property type="evidence" value="ECO:0000315"/>
    <property type="project" value="FlyBase"/>
</dbReference>
<dbReference type="GO" id="GO:0019094">
    <property type="term" value="P:pole plasm mRNA localization"/>
    <property type="evidence" value="ECO:0000304"/>
    <property type="project" value="FlyBase"/>
</dbReference>
<dbReference type="GO" id="GO:0007318">
    <property type="term" value="P:pole plasm protein localization"/>
    <property type="evidence" value="ECO:0000304"/>
    <property type="project" value="FlyBase"/>
</dbReference>
<dbReference type="GO" id="GO:0007359">
    <property type="term" value="P:posterior abdomen determination"/>
    <property type="evidence" value="ECO:0000315"/>
    <property type="project" value="FlyBase"/>
</dbReference>
<dbReference type="GO" id="GO:0034504">
    <property type="term" value="P:protein localization to nucleus"/>
    <property type="evidence" value="ECO:0000315"/>
    <property type="project" value="FlyBase"/>
</dbReference>
<dbReference type="GO" id="GO:0043488">
    <property type="term" value="P:regulation of mRNA stability"/>
    <property type="evidence" value="ECO:0000315"/>
    <property type="project" value="FlyBase"/>
</dbReference>
<dbReference type="GO" id="GO:0046011">
    <property type="term" value="P:regulation of oskar mRNA translation"/>
    <property type="evidence" value="ECO:0000304"/>
    <property type="project" value="FlyBase"/>
</dbReference>
<dbReference type="GO" id="GO:0035282">
    <property type="term" value="P:segmentation"/>
    <property type="evidence" value="ECO:0000315"/>
    <property type="project" value="FlyBase"/>
</dbReference>
<dbReference type="GO" id="GO:0040040">
    <property type="term" value="P:thermosensory behavior"/>
    <property type="evidence" value="ECO:0000315"/>
    <property type="project" value="FlyBase"/>
</dbReference>
<dbReference type="GO" id="GO:0007632">
    <property type="term" value="P:visual behavior"/>
    <property type="evidence" value="ECO:0000315"/>
    <property type="project" value="FlyBase"/>
</dbReference>
<dbReference type="GO" id="GO:0008542">
    <property type="term" value="P:visual learning"/>
    <property type="evidence" value="ECO:0000315"/>
    <property type="project" value="FlyBase"/>
</dbReference>
<dbReference type="CDD" id="cd09972">
    <property type="entry name" value="LOTUS_TDRD_OSKAR"/>
    <property type="match status" value="1"/>
</dbReference>
<dbReference type="FunFam" id="3.40.50.1110:FF:000054">
    <property type="entry name" value="Maternal effect protein oskar"/>
    <property type="match status" value="1"/>
</dbReference>
<dbReference type="Gene3D" id="3.30.420.610">
    <property type="entry name" value="LOTUS domain-like"/>
    <property type="match status" value="1"/>
</dbReference>
<dbReference type="Gene3D" id="3.40.50.1110">
    <property type="entry name" value="SGNH hydrolase"/>
    <property type="match status" value="1"/>
</dbReference>
<dbReference type="InterPro" id="IPR041966">
    <property type="entry name" value="LOTUS-like"/>
</dbReference>
<dbReference type="InterPro" id="IPR033447">
    <property type="entry name" value="OSK"/>
</dbReference>
<dbReference type="InterPro" id="IPR025605">
    <property type="entry name" value="OST-HTH/LOTUS_dom"/>
</dbReference>
<dbReference type="InterPro" id="IPR036514">
    <property type="entry name" value="SGNH_hydro_sf"/>
</dbReference>
<dbReference type="Pfam" id="PF17182">
    <property type="entry name" value="OSK"/>
    <property type="match status" value="1"/>
</dbReference>
<dbReference type="Pfam" id="PF12872">
    <property type="entry name" value="OST-HTH"/>
    <property type="match status" value="1"/>
</dbReference>
<dbReference type="SUPFAM" id="SSF52266">
    <property type="entry name" value="SGNH hydrolase"/>
    <property type="match status" value="1"/>
</dbReference>
<dbReference type="PROSITE" id="PS51644">
    <property type="entry name" value="HTH_OST"/>
    <property type="match status" value="1"/>
</dbReference>
<evidence type="ECO:0000255" key="1"/>
<evidence type="ECO:0000255" key="2">
    <source>
        <dbReference type="PROSITE-ProRule" id="PRU00975"/>
    </source>
</evidence>
<evidence type="ECO:0000269" key="3">
    <source>
    </source>
</evidence>
<evidence type="ECO:0000269" key="4">
    <source>
    </source>
</evidence>
<evidence type="ECO:0000269" key="5">
    <source>
    </source>
</evidence>
<evidence type="ECO:0000269" key="6">
    <source>
    </source>
</evidence>
<evidence type="ECO:0000269" key="7">
    <source>
    </source>
</evidence>
<evidence type="ECO:0000269" key="8">
    <source>
    </source>
</evidence>
<evidence type="ECO:0000269" key="9">
    <source>
    </source>
</evidence>
<evidence type="ECO:0000303" key="10">
    <source>
    </source>
</evidence>
<evidence type="ECO:0000303" key="11">
    <source>
    </source>
</evidence>
<evidence type="ECO:0000312" key="12">
    <source>
        <dbReference type="FlyBase" id="FBgn0003015"/>
    </source>
</evidence>
<evidence type="ECO:0007829" key="13">
    <source>
        <dbReference type="PDB" id="5A4A"/>
    </source>
</evidence>
<evidence type="ECO:0007829" key="14">
    <source>
        <dbReference type="PDB" id="5NT7"/>
    </source>
</evidence>
<gene>
    <name type="primary">osk</name>
    <name type="ORF">CG10901</name>
</gene>